<gene>
    <name type="primary">MBR1</name>
    <name type="ORF">C1Q_04521</name>
</gene>
<keyword id="KW-0496">Mitochondrion</keyword>
<keyword id="KW-0597">Phosphoprotein</keyword>
<keyword id="KW-0346">Stress response</keyword>
<comment type="function">
    <text evidence="1">Participates in mitochondrial biogenesis and stress response.</text>
</comment>
<comment type="subcellular location">
    <subcellularLocation>
        <location evidence="4">Mitochondrion</location>
    </subcellularLocation>
</comment>
<comment type="similarity">
    <text evidence="4">Belongs to the ISF1/MBR1 family.</text>
</comment>
<feature type="chain" id="PRO_0000408862" description="Mitochondrial biogenesis regulation protein 1">
    <location>
        <begin position="1"/>
        <end position="339"/>
    </location>
</feature>
<feature type="region of interest" description="Disordered" evidence="3">
    <location>
        <begin position="1"/>
        <end position="20"/>
    </location>
</feature>
<feature type="region of interest" description="Disordered" evidence="3">
    <location>
        <begin position="93"/>
        <end position="156"/>
    </location>
</feature>
<feature type="region of interest" description="Disordered" evidence="3">
    <location>
        <begin position="199"/>
        <end position="224"/>
    </location>
</feature>
<feature type="region of interest" description="Disordered" evidence="3">
    <location>
        <begin position="258"/>
        <end position="325"/>
    </location>
</feature>
<feature type="compositionally biased region" description="Polar residues" evidence="3">
    <location>
        <begin position="99"/>
        <end position="115"/>
    </location>
</feature>
<feature type="compositionally biased region" description="Low complexity" evidence="3">
    <location>
        <begin position="136"/>
        <end position="149"/>
    </location>
</feature>
<feature type="compositionally biased region" description="Polar residues" evidence="3">
    <location>
        <begin position="199"/>
        <end position="213"/>
    </location>
</feature>
<feature type="compositionally biased region" description="Low complexity" evidence="3">
    <location>
        <begin position="214"/>
        <end position="224"/>
    </location>
</feature>
<feature type="compositionally biased region" description="Low complexity" evidence="3">
    <location>
        <begin position="279"/>
        <end position="293"/>
    </location>
</feature>
<feature type="compositionally biased region" description="Low complexity" evidence="3">
    <location>
        <begin position="302"/>
        <end position="314"/>
    </location>
</feature>
<feature type="modified residue" description="Phosphothreonine" evidence="2">
    <location>
        <position position="159"/>
    </location>
</feature>
<feature type="modified residue" description="Phosphoserine" evidence="2">
    <location>
        <position position="177"/>
    </location>
</feature>
<feature type="modified residue" description="Phosphoserine" evidence="2">
    <location>
        <position position="224"/>
    </location>
</feature>
<feature type="modified residue" description="Phosphoserine" evidence="2">
    <location>
        <position position="227"/>
    </location>
</feature>
<reference key="1">
    <citation type="journal article" date="2009" name="Genome Res.">
        <title>Genome structure of a Saccharomyces cerevisiae strain widely used in bioethanol production.</title>
        <authorList>
            <person name="Argueso J.L."/>
            <person name="Carazzolle M.F."/>
            <person name="Mieczkowski P.A."/>
            <person name="Duarte F.M."/>
            <person name="Netto O.V.C."/>
            <person name="Missawa S.K."/>
            <person name="Galzerani F."/>
            <person name="Costa G.G.L."/>
            <person name="Vidal R.O."/>
            <person name="Noronha M.F."/>
            <person name="Dominska M."/>
            <person name="Andrietta M.G.S."/>
            <person name="Andrietta S.R."/>
            <person name="Cunha A.F."/>
            <person name="Gomes L.H."/>
            <person name="Tavares F.C.A."/>
            <person name="Alcarde A.R."/>
            <person name="Dietrich F.S."/>
            <person name="McCusker J.H."/>
            <person name="Petes T.D."/>
            <person name="Pereira G.A.G."/>
        </authorList>
    </citation>
    <scope>NUCLEOTIDE SEQUENCE [LARGE SCALE GENOMIC DNA]</scope>
    <source>
        <strain>JAY291</strain>
    </source>
</reference>
<evidence type="ECO:0000250" key="1"/>
<evidence type="ECO:0000250" key="2">
    <source>
        <dbReference type="UniProtKB" id="P23493"/>
    </source>
</evidence>
<evidence type="ECO:0000256" key="3">
    <source>
        <dbReference type="SAM" id="MobiDB-lite"/>
    </source>
</evidence>
<evidence type="ECO:0000305" key="4"/>
<name>MBR1_YEAS2</name>
<dbReference type="EMBL" id="ACFL01000357">
    <property type="protein sequence ID" value="EEU05179.1"/>
    <property type="molecule type" value="Genomic_DNA"/>
</dbReference>
<dbReference type="Proteomes" id="UP000008073">
    <property type="component" value="Unassembled WGS sequence"/>
</dbReference>
<dbReference type="GO" id="GO:0005739">
    <property type="term" value="C:mitochondrion"/>
    <property type="evidence" value="ECO:0007669"/>
    <property type="project" value="UniProtKB-SubCell"/>
</dbReference>
<dbReference type="InterPro" id="IPR031443">
    <property type="entry name" value="Mbr1"/>
</dbReference>
<dbReference type="Pfam" id="PF17058">
    <property type="entry name" value="MBR1"/>
    <property type="match status" value="1"/>
</dbReference>
<accession>C7GVL7</accession>
<proteinExistence type="inferred from homology"/>
<protein>
    <recommendedName>
        <fullName>Mitochondrial biogenesis regulation protein 1</fullName>
    </recommendedName>
</protein>
<sequence>MRMEKTTDKPLSAGDMNDEYSRGPIDDIDCLNFFERAVQDPCCEACDTEDADEELRAKLSSFNFQPDSSPCNAKCQQTLNPLCKIDEGLPAESELAPSRNGSVSEANSDTNSIASTVHDPVDSKYGGMPSLRKAKTTSYFTSSSSNNTTMRNPLKKCNTNINGLLVNRRSSSSSRQSIPELFSGACTKKKNNVLLKSETPNSEFSTNSLQHCNSRSFSLPRSRSRSSAIAIPTHLYGLEKYVSPELDTLTADPEESIERFSNNRPREISSCCPNDTGDTSSSLSHSNTSSSLNFPLGTNTNQFHQPRQPVQQQQSSKPNFGAGRKKSFIEMSLASSFAG</sequence>
<organism>
    <name type="scientific">Saccharomyces cerevisiae (strain JAY291)</name>
    <name type="common">Baker's yeast</name>
    <dbReference type="NCBI Taxonomy" id="574961"/>
    <lineage>
        <taxon>Eukaryota</taxon>
        <taxon>Fungi</taxon>
        <taxon>Dikarya</taxon>
        <taxon>Ascomycota</taxon>
        <taxon>Saccharomycotina</taxon>
        <taxon>Saccharomycetes</taxon>
        <taxon>Saccharomycetales</taxon>
        <taxon>Saccharomycetaceae</taxon>
        <taxon>Saccharomyces</taxon>
    </lineage>
</organism>